<comment type="function">
    <text evidence="1">May play the central regulatory role in sporulation. It may be an element of the effector pathway responsible for the activation of sporulation genes in response to nutritional stress. Spo0A may act in concert with spo0H (a sigma factor) to control the expression of some genes that are critical to the sporulation process (By similarity).</text>
</comment>
<comment type="cofactor">
    <cofactor evidence="1">
        <name>Ca(2+)</name>
        <dbReference type="ChEBI" id="CHEBI:29108"/>
    </cofactor>
    <text evidence="1">Binds 1 Ca(2+) ion per subunit.</text>
</comment>
<comment type="subcellular location">
    <subcellularLocation>
        <location evidence="4">Cytoplasm</location>
    </subcellularLocation>
</comment>
<feature type="chain" id="PRO_0000081237" description="Stage 0 sporulation protein A homolog">
    <location>
        <begin position="1"/>
        <end position="281"/>
    </location>
</feature>
<feature type="domain" description="Response regulatory" evidence="3">
    <location>
        <begin position="7"/>
        <end position="125"/>
    </location>
</feature>
<feature type="DNA-binding region" description="H-T-H motif" evidence="2">
    <location>
        <begin position="213"/>
        <end position="232"/>
    </location>
</feature>
<feature type="binding site" evidence="1">
    <location>
        <position position="12"/>
    </location>
    <ligand>
        <name>Ca(2+)</name>
        <dbReference type="ChEBI" id="CHEBI:29108"/>
    </ligand>
</feature>
<feature type="binding site" evidence="1">
    <location>
        <position position="13"/>
    </location>
    <ligand>
        <name>Ca(2+)</name>
        <dbReference type="ChEBI" id="CHEBI:29108"/>
    </ligand>
</feature>
<feature type="binding site" evidence="1">
    <location>
        <position position="58"/>
    </location>
    <ligand>
        <name>Ca(2+)</name>
        <dbReference type="ChEBI" id="CHEBI:29108"/>
    </ligand>
</feature>
<feature type="modified residue" description="4-aspartylphosphate" evidence="3">
    <location>
        <position position="58"/>
    </location>
</feature>
<accession>P58253</accession>
<sequence length="281" mass="31530">MESRKISVLIADDNKEFCNILNDYLLNQSDMIVVGIAKDGVEALKLIENKKPDLVVLDIIMPRLDGLGVLEKLNNKDAENLPRIIVLSAVGQDKITQRAITLGADYYVVKPFDMDVFTNRIREMFNNTISNSEQKRSYQVEEKEASFAGTIANDVYSDNIGNKAVDLESEITSIIHQIGVPAHIKGYMYLREAITMVVNNMELLSAVTKELYPSIAKKYNTTASRVERAIRHAIEVAWSRGQVETINKLFGYTINNGKGKPTNSEFIAMIADKLRLKNKVS</sequence>
<dbReference type="EMBL" id="AE001437">
    <property type="protein sequence ID" value="AAK80030.1"/>
    <property type="molecule type" value="Genomic_DNA"/>
</dbReference>
<dbReference type="PIR" id="C97155">
    <property type="entry name" value="C97155"/>
</dbReference>
<dbReference type="RefSeq" id="NP_348690.1">
    <property type="nucleotide sequence ID" value="NC_003030.1"/>
</dbReference>
<dbReference type="RefSeq" id="WP_010965371.1">
    <property type="nucleotide sequence ID" value="NC_003030.1"/>
</dbReference>
<dbReference type="SMR" id="P58253"/>
<dbReference type="STRING" id="272562.CA_C2071"/>
<dbReference type="GeneID" id="44998553"/>
<dbReference type="KEGG" id="cac:CA_C2071"/>
<dbReference type="PATRIC" id="fig|272562.8.peg.2275"/>
<dbReference type="eggNOG" id="COG0745">
    <property type="taxonomic scope" value="Bacteria"/>
</dbReference>
<dbReference type="HOGENOM" id="CLU_072509_0_0_9"/>
<dbReference type="OrthoDB" id="9793299at2"/>
<dbReference type="Proteomes" id="UP000000814">
    <property type="component" value="Chromosome"/>
</dbReference>
<dbReference type="GO" id="GO:0005737">
    <property type="term" value="C:cytoplasm"/>
    <property type="evidence" value="ECO:0007669"/>
    <property type="project" value="UniProtKB-SubCell"/>
</dbReference>
<dbReference type="GO" id="GO:0005509">
    <property type="term" value="F:calcium ion binding"/>
    <property type="evidence" value="ECO:0007669"/>
    <property type="project" value="InterPro"/>
</dbReference>
<dbReference type="GO" id="GO:0003677">
    <property type="term" value="F:DNA binding"/>
    <property type="evidence" value="ECO:0007669"/>
    <property type="project" value="UniProtKB-KW"/>
</dbReference>
<dbReference type="GO" id="GO:0003700">
    <property type="term" value="F:DNA-binding transcription factor activity"/>
    <property type="evidence" value="ECO:0007669"/>
    <property type="project" value="InterPro"/>
</dbReference>
<dbReference type="GO" id="GO:0051606">
    <property type="term" value="P:detection of stimulus"/>
    <property type="evidence" value="ECO:0007669"/>
    <property type="project" value="InterPro"/>
</dbReference>
<dbReference type="GO" id="GO:0000160">
    <property type="term" value="P:phosphorelay signal transduction system"/>
    <property type="evidence" value="ECO:0007669"/>
    <property type="project" value="UniProtKB-KW"/>
</dbReference>
<dbReference type="GO" id="GO:0042173">
    <property type="term" value="P:regulation of sporulation resulting in formation of a cellular spore"/>
    <property type="evidence" value="ECO:0007669"/>
    <property type="project" value="InterPro"/>
</dbReference>
<dbReference type="GO" id="GO:0030435">
    <property type="term" value="P:sporulation resulting in formation of a cellular spore"/>
    <property type="evidence" value="ECO:0007669"/>
    <property type="project" value="UniProtKB-KW"/>
</dbReference>
<dbReference type="CDD" id="cd17561">
    <property type="entry name" value="REC_Spo0A"/>
    <property type="match status" value="1"/>
</dbReference>
<dbReference type="FunFam" id="1.10.10.10:FF:000107">
    <property type="entry name" value="Stage 0 sporulation protein A"/>
    <property type="match status" value="1"/>
</dbReference>
<dbReference type="Gene3D" id="3.40.50.2300">
    <property type="match status" value="1"/>
</dbReference>
<dbReference type="Gene3D" id="1.10.10.10">
    <property type="entry name" value="Winged helix-like DNA-binding domain superfamily/Winged helix DNA-binding domain"/>
    <property type="match status" value="1"/>
</dbReference>
<dbReference type="InterPro" id="IPR011006">
    <property type="entry name" value="CheY-like_superfamily"/>
</dbReference>
<dbReference type="InterPro" id="IPR016032">
    <property type="entry name" value="Sig_transdc_resp-reg_C-effctor"/>
</dbReference>
<dbReference type="InterPro" id="IPR001789">
    <property type="entry name" value="Sig_transdc_resp-reg_receiver"/>
</dbReference>
<dbReference type="InterPro" id="IPR014879">
    <property type="entry name" value="Spo0A_C"/>
</dbReference>
<dbReference type="InterPro" id="IPR012052">
    <property type="entry name" value="Spore_0_A"/>
</dbReference>
<dbReference type="InterPro" id="IPR052048">
    <property type="entry name" value="ST_Response_Regulator"/>
</dbReference>
<dbReference type="InterPro" id="IPR036388">
    <property type="entry name" value="WH-like_DNA-bd_sf"/>
</dbReference>
<dbReference type="NCBIfam" id="TIGR02875">
    <property type="entry name" value="spore_0_A"/>
    <property type="match status" value="1"/>
</dbReference>
<dbReference type="PANTHER" id="PTHR43228:SF5">
    <property type="entry name" value="STAGE 0 SPORULATION PROTEIN A"/>
    <property type="match status" value="1"/>
</dbReference>
<dbReference type="PANTHER" id="PTHR43228">
    <property type="entry name" value="TWO-COMPONENT RESPONSE REGULATOR"/>
    <property type="match status" value="1"/>
</dbReference>
<dbReference type="Pfam" id="PF00072">
    <property type="entry name" value="Response_reg"/>
    <property type="match status" value="1"/>
</dbReference>
<dbReference type="Pfam" id="PF08769">
    <property type="entry name" value="Spo0A_C"/>
    <property type="match status" value="1"/>
</dbReference>
<dbReference type="PIRSF" id="PIRSF002937">
    <property type="entry name" value="Res_reg_Spo0A"/>
    <property type="match status" value="1"/>
</dbReference>
<dbReference type="SMART" id="SM00448">
    <property type="entry name" value="REC"/>
    <property type="match status" value="1"/>
</dbReference>
<dbReference type="SUPFAM" id="SSF46894">
    <property type="entry name" value="C-terminal effector domain of the bipartite response regulators"/>
    <property type="match status" value="1"/>
</dbReference>
<dbReference type="SUPFAM" id="SSF52172">
    <property type="entry name" value="CheY-like"/>
    <property type="match status" value="1"/>
</dbReference>
<dbReference type="PROSITE" id="PS50110">
    <property type="entry name" value="RESPONSE_REGULATORY"/>
    <property type="match status" value="1"/>
</dbReference>
<organism>
    <name type="scientific">Clostridium acetobutylicum (strain ATCC 824 / DSM 792 / JCM 1419 / IAM 19013 / LMG 5710 / NBRC 13948 / NRRL B-527 / VKM B-1787 / 2291 / W)</name>
    <dbReference type="NCBI Taxonomy" id="272562"/>
    <lineage>
        <taxon>Bacteria</taxon>
        <taxon>Bacillati</taxon>
        <taxon>Bacillota</taxon>
        <taxon>Clostridia</taxon>
        <taxon>Eubacteriales</taxon>
        <taxon>Clostridiaceae</taxon>
        <taxon>Clostridium</taxon>
    </lineage>
</organism>
<name>SP0A_CLOAB</name>
<protein>
    <recommendedName>
        <fullName>Stage 0 sporulation protein A homolog</fullName>
    </recommendedName>
</protein>
<reference key="1">
    <citation type="journal article" date="2001" name="J. Bacteriol.">
        <title>Genome sequence and comparative analysis of the solvent-producing bacterium Clostridium acetobutylicum.</title>
        <authorList>
            <person name="Noelling J."/>
            <person name="Breton G."/>
            <person name="Omelchenko M.V."/>
            <person name="Makarova K.S."/>
            <person name="Zeng Q."/>
            <person name="Gibson R."/>
            <person name="Lee H.M."/>
            <person name="Dubois J."/>
            <person name="Qiu D."/>
            <person name="Hitti J."/>
            <person name="Wolf Y.I."/>
            <person name="Tatusov R.L."/>
            <person name="Sabathe F."/>
            <person name="Doucette-Stamm L.A."/>
            <person name="Soucaille P."/>
            <person name="Daly M.J."/>
            <person name="Bennett G.N."/>
            <person name="Koonin E.V."/>
            <person name="Smith D.R."/>
        </authorList>
    </citation>
    <scope>NUCLEOTIDE SEQUENCE [LARGE SCALE GENOMIC DNA]</scope>
    <source>
        <strain>ATCC 824 / DSM 792 / JCM 1419 / IAM 19013 / LMG 5710 / NBRC 13948 / NRRL B-527 / VKM B-1787 / 2291 / W</strain>
    </source>
</reference>
<gene>
    <name type="primary">spo0A</name>
    <name type="ordered locus">CA_C2071</name>
</gene>
<proteinExistence type="inferred from homology"/>
<keyword id="KW-0010">Activator</keyword>
<keyword id="KW-0106">Calcium</keyword>
<keyword id="KW-0963">Cytoplasm</keyword>
<keyword id="KW-0238">DNA-binding</keyword>
<keyword id="KW-0479">Metal-binding</keyword>
<keyword id="KW-0597">Phosphoprotein</keyword>
<keyword id="KW-1185">Reference proteome</keyword>
<keyword id="KW-0678">Repressor</keyword>
<keyword id="KW-0749">Sporulation</keyword>
<keyword id="KW-0804">Transcription</keyword>
<keyword id="KW-0805">Transcription regulation</keyword>
<keyword id="KW-0902">Two-component regulatory system</keyword>
<evidence type="ECO:0000250" key="1"/>
<evidence type="ECO:0000255" key="2"/>
<evidence type="ECO:0000255" key="3">
    <source>
        <dbReference type="PROSITE-ProRule" id="PRU00169"/>
    </source>
</evidence>
<evidence type="ECO:0000305" key="4"/>